<sequence>MNLQTMIRTLQDYWSEQGCIMLQSYDVEKGAGTMSPYTFLKAIGPEPWKAGYVEPSRRPADGRYGENPNRLFQHHQFQVVMKPSPDNIQELYLGSLEKLGINPLEHDIRFVEDNWENPSLGCAGLGWEVWLDGMEITQFTYFQQVGGLECFPVTSEITYGVERLASYIQDKENVFDLEWTEGISYRDIFFQAEFENSTYAFETSNTDMLLTLFDTYEREATRQMQDGLVFPAYDYVLKCSHTFNLLDARGVVSVTERAQYIGRIRNLARRIAKTFYESREKLGFPLLKEEGGKRHE</sequence>
<dbReference type="EC" id="6.1.1.14" evidence="1"/>
<dbReference type="EMBL" id="CP001175">
    <property type="protein sequence ID" value="ACK39459.1"/>
    <property type="molecule type" value="Genomic_DNA"/>
</dbReference>
<dbReference type="RefSeq" id="WP_003721965.1">
    <property type="nucleotide sequence ID" value="NC_011660.1"/>
</dbReference>
<dbReference type="SMR" id="B8DE52"/>
<dbReference type="KEGG" id="lmh:LMHCC_1111"/>
<dbReference type="HOGENOM" id="CLU_057066_1_0_9"/>
<dbReference type="GO" id="GO:0005829">
    <property type="term" value="C:cytosol"/>
    <property type="evidence" value="ECO:0007669"/>
    <property type="project" value="TreeGrafter"/>
</dbReference>
<dbReference type="GO" id="GO:0005524">
    <property type="term" value="F:ATP binding"/>
    <property type="evidence" value="ECO:0007669"/>
    <property type="project" value="UniProtKB-UniRule"/>
</dbReference>
<dbReference type="GO" id="GO:0140096">
    <property type="term" value="F:catalytic activity, acting on a protein"/>
    <property type="evidence" value="ECO:0007669"/>
    <property type="project" value="UniProtKB-ARBA"/>
</dbReference>
<dbReference type="GO" id="GO:0004820">
    <property type="term" value="F:glycine-tRNA ligase activity"/>
    <property type="evidence" value="ECO:0007669"/>
    <property type="project" value="UniProtKB-UniRule"/>
</dbReference>
<dbReference type="GO" id="GO:0016740">
    <property type="term" value="F:transferase activity"/>
    <property type="evidence" value="ECO:0007669"/>
    <property type="project" value="UniProtKB-ARBA"/>
</dbReference>
<dbReference type="GO" id="GO:0006426">
    <property type="term" value="P:glycyl-tRNA aminoacylation"/>
    <property type="evidence" value="ECO:0007669"/>
    <property type="project" value="UniProtKB-UniRule"/>
</dbReference>
<dbReference type="CDD" id="cd00733">
    <property type="entry name" value="GlyRS_alpha_core"/>
    <property type="match status" value="1"/>
</dbReference>
<dbReference type="FunFam" id="3.30.930.10:FF:000006">
    <property type="entry name" value="Glycine--tRNA ligase alpha subunit"/>
    <property type="match status" value="1"/>
</dbReference>
<dbReference type="Gene3D" id="3.30.930.10">
    <property type="entry name" value="Bira Bifunctional Protein, Domain 2"/>
    <property type="match status" value="1"/>
</dbReference>
<dbReference type="Gene3D" id="1.20.58.180">
    <property type="entry name" value="Class II aaRS and biotin synthetases, domain 2"/>
    <property type="match status" value="1"/>
</dbReference>
<dbReference type="HAMAP" id="MF_00254">
    <property type="entry name" value="Gly_tRNA_synth_alpha"/>
    <property type="match status" value="1"/>
</dbReference>
<dbReference type="InterPro" id="IPR045864">
    <property type="entry name" value="aa-tRNA-synth_II/BPL/LPL"/>
</dbReference>
<dbReference type="InterPro" id="IPR006194">
    <property type="entry name" value="Gly-tRNA-synth_heterodimer"/>
</dbReference>
<dbReference type="InterPro" id="IPR002310">
    <property type="entry name" value="Gly-tRNA_ligase_asu"/>
</dbReference>
<dbReference type="NCBIfam" id="TIGR00388">
    <property type="entry name" value="glyQ"/>
    <property type="match status" value="1"/>
</dbReference>
<dbReference type="NCBIfam" id="NF006827">
    <property type="entry name" value="PRK09348.1"/>
    <property type="match status" value="1"/>
</dbReference>
<dbReference type="PANTHER" id="PTHR30075:SF2">
    <property type="entry name" value="GLYCINE--TRNA LIGASE, CHLOROPLASTIC_MITOCHONDRIAL 2"/>
    <property type="match status" value="1"/>
</dbReference>
<dbReference type="PANTHER" id="PTHR30075">
    <property type="entry name" value="GLYCYL-TRNA SYNTHETASE"/>
    <property type="match status" value="1"/>
</dbReference>
<dbReference type="Pfam" id="PF02091">
    <property type="entry name" value="tRNA-synt_2e"/>
    <property type="match status" value="1"/>
</dbReference>
<dbReference type="PRINTS" id="PR01044">
    <property type="entry name" value="TRNASYNTHGA"/>
</dbReference>
<dbReference type="SUPFAM" id="SSF55681">
    <property type="entry name" value="Class II aaRS and biotin synthetases"/>
    <property type="match status" value="1"/>
</dbReference>
<dbReference type="PROSITE" id="PS50861">
    <property type="entry name" value="AA_TRNA_LIGASE_II_GLYAB"/>
    <property type="match status" value="1"/>
</dbReference>
<comment type="catalytic activity">
    <reaction evidence="1">
        <text>tRNA(Gly) + glycine + ATP = glycyl-tRNA(Gly) + AMP + diphosphate</text>
        <dbReference type="Rhea" id="RHEA:16013"/>
        <dbReference type="Rhea" id="RHEA-COMP:9664"/>
        <dbReference type="Rhea" id="RHEA-COMP:9683"/>
        <dbReference type="ChEBI" id="CHEBI:30616"/>
        <dbReference type="ChEBI" id="CHEBI:33019"/>
        <dbReference type="ChEBI" id="CHEBI:57305"/>
        <dbReference type="ChEBI" id="CHEBI:78442"/>
        <dbReference type="ChEBI" id="CHEBI:78522"/>
        <dbReference type="ChEBI" id="CHEBI:456215"/>
        <dbReference type="EC" id="6.1.1.14"/>
    </reaction>
</comment>
<comment type="subunit">
    <text evidence="1">Tetramer of two alpha and two beta subunits.</text>
</comment>
<comment type="subcellular location">
    <subcellularLocation>
        <location evidence="1">Cytoplasm</location>
    </subcellularLocation>
</comment>
<comment type="similarity">
    <text evidence="1">Belongs to the class-II aminoacyl-tRNA synthetase family.</text>
</comment>
<proteinExistence type="inferred from homology"/>
<feature type="chain" id="PRO_1000125552" description="Glycine--tRNA ligase alpha subunit">
    <location>
        <begin position="1"/>
        <end position="296"/>
    </location>
</feature>
<accession>B8DE52</accession>
<organism>
    <name type="scientific">Listeria monocytogenes serotype 4a (strain HCC23)</name>
    <dbReference type="NCBI Taxonomy" id="552536"/>
    <lineage>
        <taxon>Bacteria</taxon>
        <taxon>Bacillati</taxon>
        <taxon>Bacillota</taxon>
        <taxon>Bacilli</taxon>
        <taxon>Bacillales</taxon>
        <taxon>Listeriaceae</taxon>
        <taxon>Listeria</taxon>
    </lineage>
</organism>
<gene>
    <name evidence="1" type="primary">glyQ</name>
    <name type="ordered locus">LMHCC_1111</name>
</gene>
<reference key="1">
    <citation type="journal article" date="2011" name="J. Bacteriol.">
        <title>Genome sequence of lineage III Listeria monocytogenes strain HCC23.</title>
        <authorList>
            <person name="Steele C.L."/>
            <person name="Donaldson J.R."/>
            <person name="Paul D."/>
            <person name="Banes M.M."/>
            <person name="Arick T."/>
            <person name="Bridges S.M."/>
            <person name="Lawrence M.L."/>
        </authorList>
    </citation>
    <scope>NUCLEOTIDE SEQUENCE [LARGE SCALE GENOMIC DNA]</scope>
    <source>
        <strain>HCC23</strain>
    </source>
</reference>
<name>SYGA_LISMH</name>
<protein>
    <recommendedName>
        <fullName evidence="1">Glycine--tRNA ligase alpha subunit</fullName>
        <ecNumber evidence="1">6.1.1.14</ecNumber>
    </recommendedName>
    <alternativeName>
        <fullName evidence="1">Glycyl-tRNA synthetase alpha subunit</fullName>
        <shortName evidence="1">GlyRS</shortName>
    </alternativeName>
</protein>
<keyword id="KW-0030">Aminoacyl-tRNA synthetase</keyword>
<keyword id="KW-0067">ATP-binding</keyword>
<keyword id="KW-0963">Cytoplasm</keyword>
<keyword id="KW-0436">Ligase</keyword>
<keyword id="KW-0547">Nucleotide-binding</keyword>
<keyword id="KW-0648">Protein biosynthesis</keyword>
<evidence type="ECO:0000255" key="1">
    <source>
        <dbReference type="HAMAP-Rule" id="MF_00254"/>
    </source>
</evidence>